<organism>
    <name type="scientific">Metallosphaera sedula (strain ATCC 51363 / DSM 5348 / JCM 9185 / NBRC 15509 / TH2)</name>
    <dbReference type="NCBI Taxonomy" id="399549"/>
    <lineage>
        <taxon>Archaea</taxon>
        <taxon>Thermoproteota</taxon>
        <taxon>Thermoprotei</taxon>
        <taxon>Sulfolobales</taxon>
        <taxon>Sulfolobaceae</taxon>
        <taxon>Metallosphaera</taxon>
    </lineage>
</organism>
<comment type="function">
    <text evidence="1">Involved in the biosynthesis of the thiazole moiety of thiamine. Catalyzes the conversion of NAD and glycine to adenosine diphosphate 5-(2-hydroxyethyl)-4-methylthiazole-2-carboxylate (ADT), an adenylated thiazole intermediate, using free sulfide as a source of sulfur.</text>
</comment>
<comment type="catalytic activity">
    <reaction evidence="1">
        <text>hydrogen sulfide + glycine + NAD(+) = ADP-5-ethyl-4-methylthiazole-2-carboxylate + nicotinamide + 3 H2O + H(+)</text>
        <dbReference type="Rhea" id="RHEA:55704"/>
        <dbReference type="ChEBI" id="CHEBI:15377"/>
        <dbReference type="ChEBI" id="CHEBI:15378"/>
        <dbReference type="ChEBI" id="CHEBI:17154"/>
        <dbReference type="ChEBI" id="CHEBI:29919"/>
        <dbReference type="ChEBI" id="CHEBI:57305"/>
        <dbReference type="ChEBI" id="CHEBI:57540"/>
        <dbReference type="ChEBI" id="CHEBI:139151"/>
        <dbReference type="EC" id="2.4.2.59"/>
    </reaction>
</comment>
<comment type="cofactor">
    <cofactor evidence="1">
        <name>Fe(2+)</name>
        <dbReference type="ChEBI" id="CHEBI:29033"/>
    </cofactor>
</comment>
<comment type="pathway">
    <text evidence="1">Cofactor biosynthesis; thiamine diphosphate biosynthesis.</text>
</comment>
<comment type="subunit">
    <text evidence="1">Homooctamer; tetramer of dimers.</text>
</comment>
<comment type="similarity">
    <text evidence="1">Belongs to the THI4 family.</text>
</comment>
<evidence type="ECO:0000255" key="1">
    <source>
        <dbReference type="HAMAP-Rule" id="MF_00304"/>
    </source>
</evidence>
<reference key="1">
    <citation type="journal article" date="2008" name="Appl. Environ. Microbiol.">
        <title>The genome sequence of the metal-mobilizing, extremely thermoacidophilic archaeon Metallosphaera sedula provides insights into bioleaching-associated metabolism.</title>
        <authorList>
            <person name="Auernik K.S."/>
            <person name="Maezato Y."/>
            <person name="Blum P.H."/>
            <person name="Kelly R.M."/>
        </authorList>
    </citation>
    <scope>NUCLEOTIDE SEQUENCE [LARGE SCALE GENOMIC DNA]</scope>
    <source>
        <strain>ATCC 51363 / DSM 5348 / JCM 9185 / NBRC 15509 / TH2</strain>
    </source>
</reference>
<keyword id="KW-0408">Iron</keyword>
<keyword id="KW-0479">Metal-binding</keyword>
<keyword id="KW-0520">NAD</keyword>
<keyword id="KW-1185">Reference proteome</keyword>
<keyword id="KW-0784">Thiamine biosynthesis</keyword>
<keyword id="KW-0808">Transferase</keyword>
<dbReference type="EC" id="2.4.2.59" evidence="1"/>
<dbReference type="EMBL" id="CP000682">
    <property type="protein sequence ID" value="ABP96359.1"/>
    <property type="molecule type" value="Genomic_DNA"/>
</dbReference>
<dbReference type="RefSeq" id="WP_012022146.1">
    <property type="nucleotide sequence ID" value="NC_009440.1"/>
</dbReference>
<dbReference type="SMR" id="A4YIV7"/>
<dbReference type="STRING" id="399549.Msed_2221"/>
<dbReference type="GeneID" id="91756766"/>
<dbReference type="KEGG" id="mse:Msed_2221"/>
<dbReference type="eggNOG" id="arCOG00574">
    <property type="taxonomic scope" value="Archaea"/>
</dbReference>
<dbReference type="HOGENOM" id="CLU_053727_2_0_2"/>
<dbReference type="UniPathway" id="UPA00060"/>
<dbReference type="Proteomes" id="UP000000242">
    <property type="component" value="Chromosome"/>
</dbReference>
<dbReference type="GO" id="GO:0005506">
    <property type="term" value="F:iron ion binding"/>
    <property type="evidence" value="ECO:0007669"/>
    <property type="project" value="UniProtKB-UniRule"/>
</dbReference>
<dbReference type="GO" id="GO:0016763">
    <property type="term" value="F:pentosyltransferase activity"/>
    <property type="evidence" value="ECO:0007669"/>
    <property type="project" value="UniProtKB-UniRule"/>
</dbReference>
<dbReference type="GO" id="GO:0009228">
    <property type="term" value="P:thiamine biosynthetic process"/>
    <property type="evidence" value="ECO:0007669"/>
    <property type="project" value="UniProtKB-KW"/>
</dbReference>
<dbReference type="GO" id="GO:0009229">
    <property type="term" value="P:thiamine diphosphate biosynthetic process"/>
    <property type="evidence" value="ECO:0007669"/>
    <property type="project" value="UniProtKB-UniRule"/>
</dbReference>
<dbReference type="GO" id="GO:0052837">
    <property type="term" value="P:thiazole biosynthetic process"/>
    <property type="evidence" value="ECO:0007669"/>
    <property type="project" value="UniProtKB-UniRule"/>
</dbReference>
<dbReference type="Gene3D" id="3.50.50.60">
    <property type="entry name" value="FAD/NAD(P)-binding domain"/>
    <property type="match status" value="1"/>
</dbReference>
<dbReference type="HAMAP" id="MF_00304">
    <property type="entry name" value="Thi4"/>
    <property type="match status" value="1"/>
</dbReference>
<dbReference type="InterPro" id="IPR036188">
    <property type="entry name" value="FAD/NAD-bd_sf"/>
</dbReference>
<dbReference type="InterPro" id="IPR002922">
    <property type="entry name" value="Thi4_fam"/>
</dbReference>
<dbReference type="InterPro" id="IPR022828">
    <property type="entry name" value="Thi4_prok"/>
</dbReference>
<dbReference type="NCBIfam" id="TIGR00292">
    <property type="entry name" value="sulfide-dependent adenosine diphosphate thiazole synthase"/>
    <property type="match status" value="1"/>
</dbReference>
<dbReference type="PANTHER" id="PTHR43422">
    <property type="entry name" value="THIAMINE THIAZOLE SYNTHASE"/>
    <property type="match status" value="1"/>
</dbReference>
<dbReference type="PANTHER" id="PTHR43422:SF3">
    <property type="entry name" value="THIAMINE THIAZOLE SYNTHASE"/>
    <property type="match status" value="1"/>
</dbReference>
<dbReference type="Pfam" id="PF01946">
    <property type="entry name" value="Thi4"/>
    <property type="match status" value="1"/>
</dbReference>
<dbReference type="PRINTS" id="PR00368">
    <property type="entry name" value="FADPNR"/>
</dbReference>
<dbReference type="PRINTS" id="PR00411">
    <property type="entry name" value="PNDRDTASEI"/>
</dbReference>
<dbReference type="SUPFAM" id="SSF51905">
    <property type="entry name" value="FAD/NAD(P)-binding domain"/>
    <property type="match status" value="1"/>
</dbReference>
<gene>
    <name evidence="1" type="primary">thi4</name>
    <name type="ordered locus">Msed_2221</name>
</gene>
<feature type="chain" id="PRO_0000322220" description="Thiamine thiazole synthase">
    <location>
        <begin position="1"/>
        <end position="271"/>
    </location>
</feature>
<feature type="binding site" description="in other chain" evidence="1">
    <location>
        <position position="39"/>
    </location>
    <ligand>
        <name>NAD(+)</name>
        <dbReference type="ChEBI" id="CHEBI:57540"/>
        <note>ligand shared between two adjacent protomers</note>
    </ligand>
</feature>
<feature type="binding site" description="in other chain" evidence="1">
    <location>
        <begin position="58"/>
        <end position="59"/>
    </location>
    <ligand>
        <name>NAD(+)</name>
        <dbReference type="ChEBI" id="CHEBI:57540"/>
        <note>ligand shared between two adjacent protomers</note>
    </ligand>
</feature>
<feature type="binding site" description="in other chain" evidence="1">
    <location>
        <position position="66"/>
    </location>
    <ligand>
        <name>NAD(+)</name>
        <dbReference type="ChEBI" id="CHEBI:57540"/>
        <note>ligand shared between two adjacent protomers</note>
    </ligand>
</feature>
<feature type="binding site" description="in other chain" evidence="1">
    <location>
        <position position="130"/>
    </location>
    <ligand>
        <name>NAD(+)</name>
        <dbReference type="ChEBI" id="CHEBI:57540"/>
        <note>ligand shared between two adjacent protomers</note>
    </ligand>
</feature>
<feature type="binding site" evidence="1">
    <location>
        <begin position="158"/>
        <end position="160"/>
    </location>
    <ligand>
        <name>NAD(+)</name>
        <dbReference type="ChEBI" id="CHEBI:57540"/>
        <note>ligand shared between two adjacent protomers</note>
    </ligand>
</feature>
<feature type="binding site" evidence="1">
    <location>
        <position position="160"/>
    </location>
    <ligand>
        <name>Fe cation</name>
        <dbReference type="ChEBI" id="CHEBI:24875"/>
        <note>ligand shared between two adjacent protomers</note>
    </ligand>
</feature>
<feature type="binding site" description="in other chain" evidence="1">
    <location>
        <position position="175"/>
    </location>
    <ligand>
        <name>Fe cation</name>
        <dbReference type="ChEBI" id="CHEBI:24875"/>
        <note>ligand shared between two adjacent protomers</note>
    </ligand>
</feature>
<feature type="binding site" description="in other chain" evidence="1">
    <location>
        <position position="225"/>
    </location>
    <ligand>
        <name>NAD(+)</name>
        <dbReference type="ChEBI" id="CHEBI:57540"/>
        <note>ligand shared between two adjacent protomers</note>
    </ligand>
</feature>
<feature type="binding site" evidence="1">
    <location>
        <position position="235"/>
    </location>
    <ligand>
        <name>glycine</name>
        <dbReference type="ChEBI" id="CHEBI:57305"/>
    </ligand>
</feature>
<accession>A4YIV7</accession>
<proteinExistence type="inferred from homology"/>
<protein>
    <recommendedName>
        <fullName evidence="1">Thiamine thiazole synthase</fullName>
        <ecNumber evidence="1">2.4.2.59</ecNumber>
    </recommendedName>
</protein>
<sequence length="271" mass="28895">MNIKQVDEIKITRYILKATFEDWMDFSVNDVVIVGAGPSGLAAAYYSAKAGLKTTVFERRLSFGGGIGGGAMLFHKIVIESPADEILREIGVKLQKFEEGVYVVDSSEFMAKLAAATIDAGAKIIHGVTVDDVIFRENPLRVTGVAVEWTATQMASLHVDPLFISAKAVVDATGHDAEVISVASRKIPELGIVIPGEKSAYSEIAEQLTVEQSGEVAPGLYAAGMAVTEIKAIPRMGPIFGAMLLSGKKVAEDIIKNLQANSATLKSVQKE</sequence>
<name>THI4_METS5</name>